<feature type="chain" id="PRO_0000145359" description="DNA gyrase subunit B">
    <location>
        <begin position="1"/>
        <end position="805"/>
    </location>
</feature>
<feature type="domain" description="Toprim" evidence="1">
    <location>
        <begin position="419"/>
        <end position="534"/>
    </location>
</feature>
<feature type="binding site" evidence="1">
    <location>
        <position position="425"/>
    </location>
    <ligand>
        <name>Mg(2+)</name>
        <dbReference type="ChEBI" id="CHEBI:18420"/>
        <label>1</label>
        <note>catalytic</note>
    </ligand>
</feature>
<feature type="binding site" evidence="1">
    <location>
        <position position="499"/>
    </location>
    <ligand>
        <name>Mg(2+)</name>
        <dbReference type="ChEBI" id="CHEBI:18420"/>
        <label>1</label>
        <note>catalytic</note>
    </ligand>
</feature>
<feature type="binding site" evidence="1">
    <location>
        <position position="499"/>
    </location>
    <ligand>
        <name>Mg(2+)</name>
        <dbReference type="ChEBI" id="CHEBI:18420"/>
        <label>2</label>
    </ligand>
</feature>
<feature type="binding site" evidence="1">
    <location>
        <position position="501"/>
    </location>
    <ligand>
        <name>Mg(2+)</name>
        <dbReference type="ChEBI" id="CHEBI:18420"/>
        <label>2</label>
    </ligand>
</feature>
<feature type="site" description="Interaction with DNA" evidence="1">
    <location>
        <position position="450"/>
    </location>
</feature>
<feature type="site" description="Interaction with DNA" evidence="1">
    <location>
        <position position="453"/>
    </location>
</feature>
<feature type="sequence conflict" description="In Ref. 2; AAC38147." evidence="2" ref="2">
    <original>A</original>
    <variation>T</variation>
    <location>
        <position position="152"/>
    </location>
</feature>
<feature type="sequence conflict" description="In Ref. 2; AAC38147." evidence="2" ref="2">
    <original>T</original>
    <variation>A</variation>
    <location>
        <position position="160"/>
    </location>
</feature>
<feature type="sequence conflict" description="In Ref. 2; AAC38147." evidence="2" ref="2">
    <original>L</original>
    <variation>I</variation>
    <location>
        <position position="290"/>
    </location>
</feature>
<feature type="sequence conflict" description="In Ref. 2; AAC38147." evidence="2" ref="2">
    <original>Y</original>
    <variation>H</variation>
    <location>
        <position position="484"/>
    </location>
</feature>
<feature type="sequence conflict" description="In Ref. 2; AAC38147." evidence="2" ref="2">
    <original>DGSHIRTL</original>
    <variation>EARTSVPC</variation>
    <location>
        <begin position="503"/>
        <end position="510"/>
    </location>
</feature>
<dbReference type="EC" id="5.6.2.2" evidence="1"/>
<dbReference type="EMBL" id="BA000031">
    <property type="protein sequence ID" value="BAC58277.1"/>
    <property type="molecule type" value="Genomic_DNA"/>
</dbReference>
<dbReference type="EMBL" id="AF007287">
    <property type="protein sequence ID" value="AAC38147.1"/>
    <property type="molecule type" value="Genomic_DNA"/>
</dbReference>
<dbReference type="RefSeq" id="NP_796393.1">
    <property type="nucleotide sequence ID" value="NC_004603.1"/>
</dbReference>
<dbReference type="RefSeq" id="WP_005458663.1">
    <property type="nucleotide sequence ID" value="NC_004603.1"/>
</dbReference>
<dbReference type="SMR" id="O51859"/>
<dbReference type="GeneID" id="1187470"/>
<dbReference type="KEGG" id="vpa:VP0014"/>
<dbReference type="PATRIC" id="fig|223926.6.peg.14"/>
<dbReference type="eggNOG" id="COG0187">
    <property type="taxonomic scope" value="Bacteria"/>
</dbReference>
<dbReference type="HOGENOM" id="CLU_006146_4_1_6"/>
<dbReference type="Proteomes" id="UP000002493">
    <property type="component" value="Chromosome 1"/>
</dbReference>
<dbReference type="GO" id="GO:0005694">
    <property type="term" value="C:chromosome"/>
    <property type="evidence" value="ECO:0007669"/>
    <property type="project" value="InterPro"/>
</dbReference>
<dbReference type="GO" id="GO:0005737">
    <property type="term" value="C:cytoplasm"/>
    <property type="evidence" value="ECO:0007669"/>
    <property type="project" value="UniProtKB-SubCell"/>
</dbReference>
<dbReference type="GO" id="GO:0005524">
    <property type="term" value="F:ATP binding"/>
    <property type="evidence" value="ECO:0007669"/>
    <property type="project" value="UniProtKB-UniRule"/>
</dbReference>
<dbReference type="GO" id="GO:0003677">
    <property type="term" value="F:DNA binding"/>
    <property type="evidence" value="ECO:0007669"/>
    <property type="project" value="UniProtKB-KW"/>
</dbReference>
<dbReference type="GO" id="GO:0003918">
    <property type="term" value="F:DNA topoisomerase type II (double strand cut, ATP-hydrolyzing) activity"/>
    <property type="evidence" value="ECO:0007669"/>
    <property type="project" value="UniProtKB-UniRule"/>
</dbReference>
<dbReference type="GO" id="GO:0046872">
    <property type="term" value="F:metal ion binding"/>
    <property type="evidence" value="ECO:0007669"/>
    <property type="project" value="UniProtKB-KW"/>
</dbReference>
<dbReference type="GO" id="GO:0006265">
    <property type="term" value="P:DNA topological change"/>
    <property type="evidence" value="ECO:0007669"/>
    <property type="project" value="UniProtKB-UniRule"/>
</dbReference>
<dbReference type="GO" id="GO:0006261">
    <property type="term" value="P:DNA-templated DNA replication"/>
    <property type="evidence" value="ECO:0007669"/>
    <property type="project" value="UniProtKB-UniRule"/>
</dbReference>
<dbReference type="CDD" id="cd16928">
    <property type="entry name" value="HATPase_GyrB-like"/>
    <property type="match status" value="1"/>
</dbReference>
<dbReference type="CDD" id="cd00822">
    <property type="entry name" value="TopoII_Trans_DNA_gyrase"/>
    <property type="match status" value="1"/>
</dbReference>
<dbReference type="CDD" id="cd03366">
    <property type="entry name" value="TOPRIM_TopoIIA_GyrB"/>
    <property type="match status" value="1"/>
</dbReference>
<dbReference type="FunFam" id="3.30.230.10:FF:000005">
    <property type="entry name" value="DNA gyrase subunit B"/>
    <property type="match status" value="1"/>
</dbReference>
<dbReference type="FunFam" id="3.30.565.10:FF:000002">
    <property type="entry name" value="DNA gyrase subunit B"/>
    <property type="match status" value="1"/>
</dbReference>
<dbReference type="FunFam" id="3.40.50.670:FF:000004">
    <property type="entry name" value="DNA gyrase subunit B"/>
    <property type="match status" value="1"/>
</dbReference>
<dbReference type="FunFam" id="3.40.50.670:FF:000005">
    <property type="entry name" value="DNA gyrase subunit B"/>
    <property type="match status" value="1"/>
</dbReference>
<dbReference type="Gene3D" id="3.10.20.690">
    <property type="match status" value="1"/>
</dbReference>
<dbReference type="Gene3D" id="3.30.230.10">
    <property type="match status" value="1"/>
</dbReference>
<dbReference type="Gene3D" id="3.40.50.670">
    <property type="match status" value="2"/>
</dbReference>
<dbReference type="Gene3D" id="3.30.565.10">
    <property type="entry name" value="Histidine kinase-like ATPase, C-terminal domain"/>
    <property type="match status" value="1"/>
</dbReference>
<dbReference type="HAMAP" id="MF_01898">
    <property type="entry name" value="GyrB"/>
    <property type="match status" value="1"/>
</dbReference>
<dbReference type="InterPro" id="IPR002288">
    <property type="entry name" value="DNA_gyrase_B_C"/>
</dbReference>
<dbReference type="InterPro" id="IPR011557">
    <property type="entry name" value="GyrB"/>
</dbReference>
<dbReference type="InterPro" id="IPR049353">
    <property type="entry name" value="GyrB_hook"/>
</dbReference>
<dbReference type="InterPro" id="IPR041423">
    <property type="entry name" value="GyrB_insert"/>
</dbReference>
<dbReference type="InterPro" id="IPR036890">
    <property type="entry name" value="HATPase_C_sf"/>
</dbReference>
<dbReference type="InterPro" id="IPR020568">
    <property type="entry name" value="Ribosomal_Su5_D2-typ_SF"/>
</dbReference>
<dbReference type="InterPro" id="IPR014721">
    <property type="entry name" value="Ribsml_uS5_D2-typ_fold_subgr"/>
</dbReference>
<dbReference type="InterPro" id="IPR001241">
    <property type="entry name" value="Topo_IIA"/>
</dbReference>
<dbReference type="InterPro" id="IPR013760">
    <property type="entry name" value="Topo_IIA-like_dom_sf"/>
</dbReference>
<dbReference type="InterPro" id="IPR000565">
    <property type="entry name" value="Topo_IIA_B"/>
</dbReference>
<dbReference type="InterPro" id="IPR013759">
    <property type="entry name" value="Topo_IIA_B_C"/>
</dbReference>
<dbReference type="InterPro" id="IPR013506">
    <property type="entry name" value="Topo_IIA_bsu_dom2"/>
</dbReference>
<dbReference type="InterPro" id="IPR018522">
    <property type="entry name" value="TopoIIA_CS"/>
</dbReference>
<dbReference type="InterPro" id="IPR006171">
    <property type="entry name" value="TOPRIM_dom"/>
</dbReference>
<dbReference type="InterPro" id="IPR034160">
    <property type="entry name" value="TOPRIM_GyrB"/>
</dbReference>
<dbReference type="NCBIfam" id="TIGR01059">
    <property type="entry name" value="gyrB"/>
    <property type="match status" value="1"/>
</dbReference>
<dbReference type="NCBIfam" id="NF004189">
    <property type="entry name" value="PRK05644.1"/>
    <property type="match status" value="1"/>
</dbReference>
<dbReference type="NCBIfam" id="NF011501">
    <property type="entry name" value="PRK14939.1"/>
    <property type="match status" value="1"/>
</dbReference>
<dbReference type="PANTHER" id="PTHR45866:SF1">
    <property type="entry name" value="DNA GYRASE SUBUNIT B, MITOCHONDRIAL"/>
    <property type="match status" value="1"/>
</dbReference>
<dbReference type="PANTHER" id="PTHR45866">
    <property type="entry name" value="DNA GYRASE/TOPOISOMERASE SUBUNIT B"/>
    <property type="match status" value="1"/>
</dbReference>
<dbReference type="Pfam" id="PF00204">
    <property type="entry name" value="DNA_gyraseB"/>
    <property type="match status" value="1"/>
</dbReference>
<dbReference type="Pfam" id="PF00986">
    <property type="entry name" value="DNA_gyraseB_C"/>
    <property type="match status" value="1"/>
</dbReference>
<dbReference type="Pfam" id="PF21249">
    <property type="entry name" value="GyrB_hook"/>
    <property type="match status" value="1"/>
</dbReference>
<dbReference type="Pfam" id="PF18053">
    <property type="entry name" value="GyrB_insert"/>
    <property type="match status" value="1"/>
</dbReference>
<dbReference type="Pfam" id="PF02518">
    <property type="entry name" value="HATPase_c"/>
    <property type="match status" value="1"/>
</dbReference>
<dbReference type="Pfam" id="PF01751">
    <property type="entry name" value="Toprim"/>
    <property type="match status" value="1"/>
</dbReference>
<dbReference type="PRINTS" id="PR01159">
    <property type="entry name" value="DNAGYRASEB"/>
</dbReference>
<dbReference type="PRINTS" id="PR00418">
    <property type="entry name" value="TPI2FAMILY"/>
</dbReference>
<dbReference type="SMART" id="SM00387">
    <property type="entry name" value="HATPase_c"/>
    <property type="match status" value="1"/>
</dbReference>
<dbReference type="SMART" id="SM00433">
    <property type="entry name" value="TOP2c"/>
    <property type="match status" value="1"/>
</dbReference>
<dbReference type="SUPFAM" id="SSF55874">
    <property type="entry name" value="ATPase domain of HSP90 chaperone/DNA topoisomerase II/histidine kinase"/>
    <property type="match status" value="1"/>
</dbReference>
<dbReference type="SUPFAM" id="SSF54211">
    <property type="entry name" value="Ribosomal protein S5 domain 2-like"/>
    <property type="match status" value="1"/>
</dbReference>
<dbReference type="SUPFAM" id="SSF56719">
    <property type="entry name" value="Type II DNA topoisomerase"/>
    <property type="match status" value="1"/>
</dbReference>
<dbReference type="PROSITE" id="PS00177">
    <property type="entry name" value="TOPOISOMERASE_II"/>
    <property type="match status" value="1"/>
</dbReference>
<dbReference type="PROSITE" id="PS50880">
    <property type="entry name" value="TOPRIM"/>
    <property type="match status" value="1"/>
</dbReference>
<sequence length="805" mass="89442">MSENYDSSSIKVLKGLDAVRKRPGMYIGDTDDGTGLHHMVFEVVDNSIDEALAGHCKDIVVTIHEDNSVSVSDDGRGIPTEMHPEEKVSAAEVIMTVLHAGGKFDDNSYKVSGGLHGVGVSVVNALSEKVVLTIHRGGHIHTQTYRHGEPEAPLAVVGDTDKTGTQIRFWPSAETFSNTEFHYDILAKRLRELSFLNSGVSIKLIDEREADKQDHFMYEGGIQAFVQHLNTNKTPIIEKIFHFDLEREDGISVEVAMQWNDGFQENIFCFTNNIPQRDGGTHLAGFRAALTRTLNSFMDKEGFSKKAKTATSGDDAREGLTAVVSVKVPDPKFSSQTKDKLVSSEVKSAVESAMGEKLSEFLVENPSEAKMVCSKIIDAARAREAARKAREMTRRKGALDLAGLPGKLADCQEKDPALSELYIVEGDSAGGSAKQGRNRKNQAILPLKGKILNVEKARFDKMLSSQEVATLITALGCGIGRDEYNPDKLRYHNIIIMTDADVDGSHIRTLLLTFFYRQMPELIERGYVYIAQPPLYKVKKGKQEQYIKDEEAMNQYQVSLALDNASLHVNAEAPALAGEALEKLVQQYNAGIKLADRMSRRYPRALVHELIYTSRLTAEQCHDAAAVEAWTKQLVEQLNAKEVGASQYSYEVELHAELGLSLPKIIVRTHGVTHEHALSVDFLNSKEYGKLADLSEVLDGLLEEGAYIKRGERTLPVSSFAEALEWLVKESMRGLSRQRYKGLGEMNPDQLWETTMDPETRRMMQVTIEDAVGADQLFTTLMGDQVEPRRHFIEENALKVANLDV</sequence>
<accession>O51859</accession>
<reference key="1">
    <citation type="journal article" date="2003" name="Lancet">
        <title>Genome sequence of Vibrio parahaemolyticus: a pathogenic mechanism distinct from that of V. cholerae.</title>
        <authorList>
            <person name="Makino K."/>
            <person name="Oshima K."/>
            <person name="Kurokawa K."/>
            <person name="Yokoyama K."/>
            <person name="Uda T."/>
            <person name="Tagomori K."/>
            <person name="Iijima Y."/>
            <person name="Najima M."/>
            <person name="Nakano M."/>
            <person name="Yamashita A."/>
            <person name="Kubota Y."/>
            <person name="Kimura S."/>
            <person name="Yasunaga T."/>
            <person name="Honda T."/>
            <person name="Shinagawa H."/>
            <person name="Hattori M."/>
            <person name="Iida T."/>
        </authorList>
    </citation>
    <scope>NUCLEOTIDE SEQUENCE [LARGE SCALE GENOMIC DNA]</scope>
    <source>
        <strain>RIMD 2210633</strain>
    </source>
</reference>
<reference key="2">
    <citation type="journal article" date="1998" name="Appl. Environ. Microbiol.">
        <title>Cloning and nucleotide sequence of the gyrB gene of Vibrio parahaemolyticus and its application in detection of this pathogen in shrimp.</title>
        <authorList>
            <person name="Venkateswaran K."/>
            <person name="Dohmoto N."/>
            <person name="Harayama S."/>
        </authorList>
    </citation>
    <scope>NUCLEOTIDE SEQUENCE [GENOMIC DNA] OF 92-510</scope>
    <source>
        <strain>ATCC 17802 / DSM 10027 / NBRC 12711 / NCIMB 1902 / LMG 2850 / NCTC 10903</strain>
    </source>
</reference>
<protein>
    <recommendedName>
        <fullName evidence="1">DNA gyrase subunit B</fullName>
        <ecNumber evidence="1">5.6.2.2</ecNumber>
    </recommendedName>
</protein>
<organism>
    <name type="scientific">Vibrio parahaemolyticus serotype O3:K6 (strain RIMD 2210633)</name>
    <dbReference type="NCBI Taxonomy" id="223926"/>
    <lineage>
        <taxon>Bacteria</taxon>
        <taxon>Pseudomonadati</taxon>
        <taxon>Pseudomonadota</taxon>
        <taxon>Gammaproteobacteria</taxon>
        <taxon>Vibrionales</taxon>
        <taxon>Vibrionaceae</taxon>
        <taxon>Vibrio</taxon>
    </lineage>
</organism>
<evidence type="ECO:0000255" key="1">
    <source>
        <dbReference type="HAMAP-Rule" id="MF_01898"/>
    </source>
</evidence>
<evidence type="ECO:0000305" key="2"/>
<proteinExistence type="inferred from homology"/>
<comment type="function">
    <text evidence="1">A type II topoisomerase that negatively supercoils closed circular double-stranded (ds) DNA in an ATP-dependent manner to modulate DNA topology and maintain chromosomes in an underwound state. Negative supercoiling favors strand separation, and DNA replication, transcription, recombination and repair, all of which involve strand separation. Also able to catalyze the interconversion of other topological isomers of dsDNA rings, including catenanes and knotted rings. Type II topoisomerases break and join 2 DNA strands simultaneously in an ATP-dependent manner.</text>
</comment>
<comment type="catalytic activity">
    <reaction evidence="1">
        <text>ATP-dependent breakage, passage and rejoining of double-stranded DNA.</text>
        <dbReference type="EC" id="5.6.2.2"/>
    </reaction>
</comment>
<comment type="cofactor">
    <cofactor evidence="1">
        <name>Mg(2+)</name>
        <dbReference type="ChEBI" id="CHEBI:18420"/>
    </cofactor>
    <cofactor evidence="1">
        <name>Mn(2+)</name>
        <dbReference type="ChEBI" id="CHEBI:29035"/>
    </cofactor>
    <cofactor evidence="1">
        <name>Ca(2+)</name>
        <dbReference type="ChEBI" id="CHEBI:29108"/>
    </cofactor>
    <text evidence="1">Binds two Mg(2+) per subunit. The magnesium ions form salt bridges with both the protein and the DNA. Can also accept other divalent metal cations, such as Mn(2+) or Ca(2+).</text>
</comment>
<comment type="subunit">
    <text evidence="1">Heterotetramer, composed of two GyrA and two GyrB chains. In the heterotetramer, GyrA contains the active site tyrosine that forms a transient covalent intermediate with DNA, while GyrB binds cofactors and catalyzes ATP hydrolysis.</text>
</comment>
<comment type="subcellular location">
    <subcellularLocation>
        <location evidence="1">Cytoplasm</location>
    </subcellularLocation>
</comment>
<comment type="miscellaneous">
    <text evidence="1">Few gyrases are as efficient as E.coli at forming negative supercoils. Not all organisms have 2 type II topoisomerases; in organisms with a single type II topoisomerase this enzyme also has to decatenate newly replicated chromosomes.</text>
</comment>
<comment type="similarity">
    <text evidence="1">Belongs to the type II topoisomerase GyrB family.</text>
</comment>
<gene>
    <name evidence="1" type="primary">gyrB</name>
    <name type="ordered locus">VP0014</name>
</gene>
<name>GYRB_VIBPA</name>
<keyword id="KW-0067">ATP-binding</keyword>
<keyword id="KW-0963">Cytoplasm</keyword>
<keyword id="KW-0238">DNA-binding</keyword>
<keyword id="KW-0413">Isomerase</keyword>
<keyword id="KW-0460">Magnesium</keyword>
<keyword id="KW-0479">Metal-binding</keyword>
<keyword id="KW-0547">Nucleotide-binding</keyword>
<keyword id="KW-0799">Topoisomerase</keyword>